<dbReference type="EMBL" id="X74478">
    <property type="protein sequence ID" value="CAA52572.1"/>
    <property type="molecule type" value="Genomic_DNA"/>
</dbReference>
<dbReference type="PIR" id="S36560">
    <property type="entry name" value="S36560"/>
</dbReference>
<dbReference type="SMR" id="P36740"/>
<dbReference type="Proteomes" id="UP000009121">
    <property type="component" value="Genome"/>
</dbReference>
<dbReference type="GO" id="GO:0042025">
    <property type="term" value="C:host cell nucleus"/>
    <property type="evidence" value="ECO:0007669"/>
    <property type="project" value="UniProtKB-SubCell"/>
</dbReference>
<dbReference type="GO" id="GO:0039620">
    <property type="term" value="C:T=7 icosahedral viral capsid"/>
    <property type="evidence" value="ECO:0007669"/>
    <property type="project" value="UniProtKB-UniRule"/>
</dbReference>
<dbReference type="GO" id="GO:0005198">
    <property type="term" value="F:structural molecule activity"/>
    <property type="evidence" value="ECO:0007669"/>
    <property type="project" value="UniProtKB-UniRule"/>
</dbReference>
<dbReference type="GO" id="GO:0075509">
    <property type="term" value="P:endocytosis involved in viral entry into host cell"/>
    <property type="evidence" value="ECO:0007669"/>
    <property type="project" value="UniProtKB-KW"/>
</dbReference>
<dbReference type="GO" id="GO:0019062">
    <property type="term" value="P:virion attachment to host cell"/>
    <property type="evidence" value="ECO:0007669"/>
    <property type="project" value="UniProtKB-UniRule"/>
</dbReference>
<dbReference type="Gene3D" id="2.60.175.20">
    <property type="entry name" value="Major capsid L1 (late) superfamily, Papillomavirus"/>
    <property type="match status" value="1"/>
</dbReference>
<dbReference type="HAMAP" id="MF_04002">
    <property type="entry name" value="PPV_L1"/>
    <property type="match status" value="1"/>
</dbReference>
<dbReference type="InterPro" id="IPR002210">
    <property type="entry name" value="Capsid_L1_Papillomavir"/>
</dbReference>
<dbReference type="InterPro" id="IPR036973">
    <property type="entry name" value="Capsid_L1_sf_Papillomavir"/>
</dbReference>
<dbReference type="InterPro" id="IPR011222">
    <property type="entry name" value="dsDNA_vir_gr_I_capsid"/>
</dbReference>
<dbReference type="Pfam" id="PF00500">
    <property type="entry name" value="Late_protein_L1"/>
    <property type="match status" value="1"/>
</dbReference>
<dbReference type="PRINTS" id="PR00865">
    <property type="entry name" value="HPVCAPSIDL1"/>
</dbReference>
<dbReference type="SUPFAM" id="SSF88648">
    <property type="entry name" value="Group I dsDNA viruses"/>
    <property type="match status" value="1"/>
</dbReference>
<name>VL1_HPV40</name>
<keyword id="KW-0167">Capsid protein</keyword>
<keyword id="KW-1015">Disulfide bond</keyword>
<keyword id="KW-1048">Host nucleus</keyword>
<keyword id="KW-0945">Host-virus interaction</keyword>
<keyword id="KW-0426">Late protein</keyword>
<keyword id="KW-1145">T=7 icosahedral capsid protein</keyword>
<keyword id="KW-1161">Viral attachment to host cell</keyword>
<keyword id="KW-1162">Viral penetration into host cytoplasm</keyword>
<keyword id="KW-0946">Virion</keyword>
<keyword id="KW-1164">Virus endocytosis by host</keyword>
<keyword id="KW-1160">Virus entry into host cell</keyword>
<reference key="1">
    <citation type="journal article" date="1994" name="Curr. Top. Microbiol. Immunol.">
        <title>Primer-directed sequencing of human papillomavirus types.</title>
        <authorList>
            <person name="Delius H."/>
            <person name="Hofmann B."/>
        </authorList>
    </citation>
    <scope>NUCLEOTIDE SEQUENCE [GENOMIC DNA]</scope>
</reference>
<organismHost>
    <name type="scientific">Homo sapiens</name>
    <name type="common">Human</name>
    <dbReference type="NCBI Taxonomy" id="9606"/>
</organismHost>
<sequence>MWQLNENQVYLPPPTPVATIVSTDEYVQRTSLYYHAGSARLLTIGHPYFELKKPNGDISVPKVSGHQYRVFRVRLPDPNKFGLSDTSLFNSETQRLVWACVGVEVGRGQPLGVGVSGHPYFNKDEDVENSSAYGTGPGQDSRENVAMDYKQTQLCMLGCTPPIGEYWGKGTPCNASRVTLGDCPVLELKTEVIQDGDMVDTGFGAMDFASLQANKSDVPLDLCTSISKYPDYLGMAAEPYGNSLFFFLRREQMFVRHFFNRAGTTGDSVPTDLYITGTSGRTPIAGSIYYSTPSGSLVTSDSQIFNKPLWIQKAQGHNNGICFGNQLFVTVVDTTRSTNLTLCAATQSPTPTPYNNSNFKEYLRHGEEFDLQFIFQLCVITLNAEVMTYIHAMDPTLLEDWNFKIAPPASASLEDTYRFLTNKAIACQRDAPPKVREDPYKKYKFWDVNLTERFSSQLDQFPLGRKFLMQAGVRAGPRFKSRKRPAPSSSSSSKPVTPKRKKTKR</sequence>
<comment type="function">
    <text evidence="1">Forms an icosahedral capsid with a T=7 symmetry and a 50 nm diameter. The capsid is composed of 72 pentamers linked to each other by disulfide bonds and associated with L2 proteins. Binds to heparan sulfate proteoglycans on cell surface of basal layer keratinocytes to provide initial virion attachment. This binding mediates a conformational change in the virus capsid that facilitates efficient infection. The virion enters the host cell via endocytosis. During virus trafficking, L1 protein dissociates from the viral DNA and the genomic DNA is released to the host nucleus. The virion assembly takes place within the cell nucleus. Encapsulates the genomic DNA together with protein L2.</text>
</comment>
<comment type="subunit">
    <text evidence="1">Self-assembles into homopentamers. The capsid has an icosahedral symmetry and consists of 72 capsomers, with each capsomer being a pentamer of L1. Interacts with the minor capsid protein L2; this interaction is necessary for viral genome encapsidation. Interacts with protein E2; this interaction enhances E2-dependent replication and transcription activation.</text>
</comment>
<comment type="subcellular location">
    <subcellularLocation>
        <location evidence="1">Virion</location>
    </subcellularLocation>
    <subcellularLocation>
        <location evidence="1">Host nucleus</location>
    </subcellularLocation>
</comment>
<comment type="similarity">
    <text evidence="1">Belongs to the papillomaviridae L1 protein family.</text>
</comment>
<protein>
    <recommendedName>
        <fullName evidence="1">Major capsid protein L1</fullName>
    </recommendedName>
</protein>
<gene>
    <name evidence="1" type="primary">L1</name>
</gene>
<accession>P36740</accession>
<feature type="chain" id="PRO_0000133524" description="Major capsid protein L1">
    <location>
        <begin position="1"/>
        <end position="505"/>
    </location>
</feature>
<feature type="region of interest" description="Disordered" evidence="2">
    <location>
        <begin position="474"/>
        <end position="505"/>
    </location>
</feature>
<feature type="compositionally biased region" description="Low complexity" evidence="2">
    <location>
        <begin position="486"/>
        <end position="496"/>
    </location>
</feature>
<feature type="disulfide bond" description="Interchain (with C-427)" evidence="1">
    <location>
        <position position="173"/>
    </location>
</feature>
<feature type="disulfide bond" description="Interchain (with C-173)" evidence="1">
    <location>
        <position position="427"/>
    </location>
</feature>
<proteinExistence type="inferred from homology"/>
<organism>
    <name type="scientific">Human papillomavirus 40</name>
    <dbReference type="NCBI Taxonomy" id="10615"/>
    <lineage>
        <taxon>Viruses</taxon>
        <taxon>Monodnaviria</taxon>
        <taxon>Shotokuvirae</taxon>
        <taxon>Cossaviricota</taxon>
        <taxon>Papovaviricetes</taxon>
        <taxon>Zurhausenvirales</taxon>
        <taxon>Papillomaviridae</taxon>
        <taxon>Firstpapillomavirinae</taxon>
        <taxon>Alphapapillomavirus</taxon>
        <taxon>Alphapapillomavirus 8</taxon>
    </lineage>
</organism>
<evidence type="ECO:0000255" key="1">
    <source>
        <dbReference type="HAMAP-Rule" id="MF_04002"/>
    </source>
</evidence>
<evidence type="ECO:0000256" key="2">
    <source>
        <dbReference type="SAM" id="MobiDB-lite"/>
    </source>
</evidence>